<proteinExistence type="inferred from homology"/>
<reference key="1">
    <citation type="journal article" date="2005" name="Nature">
        <title>Genomic sequence of the pathogenic and allergenic filamentous fungus Aspergillus fumigatus.</title>
        <authorList>
            <person name="Nierman W.C."/>
            <person name="Pain A."/>
            <person name="Anderson M.J."/>
            <person name="Wortman J.R."/>
            <person name="Kim H.S."/>
            <person name="Arroyo J."/>
            <person name="Berriman M."/>
            <person name="Abe K."/>
            <person name="Archer D.B."/>
            <person name="Bermejo C."/>
            <person name="Bennett J.W."/>
            <person name="Bowyer P."/>
            <person name="Chen D."/>
            <person name="Collins M."/>
            <person name="Coulsen R."/>
            <person name="Davies R."/>
            <person name="Dyer P.S."/>
            <person name="Farman M.L."/>
            <person name="Fedorova N."/>
            <person name="Fedorova N.D."/>
            <person name="Feldblyum T.V."/>
            <person name="Fischer R."/>
            <person name="Fosker N."/>
            <person name="Fraser A."/>
            <person name="Garcia J.L."/>
            <person name="Garcia M.J."/>
            <person name="Goble A."/>
            <person name="Goldman G.H."/>
            <person name="Gomi K."/>
            <person name="Griffith-Jones S."/>
            <person name="Gwilliam R."/>
            <person name="Haas B.J."/>
            <person name="Haas H."/>
            <person name="Harris D.E."/>
            <person name="Horiuchi H."/>
            <person name="Huang J."/>
            <person name="Humphray S."/>
            <person name="Jimenez J."/>
            <person name="Keller N."/>
            <person name="Khouri H."/>
            <person name="Kitamoto K."/>
            <person name="Kobayashi T."/>
            <person name="Konzack S."/>
            <person name="Kulkarni R."/>
            <person name="Kumagai T."/>
            <person name="Lafton A."/>
            <person name="Latge J.-P."/>
            <person name="Li W."/>
            <person name="Lord A."/>
            <person name="Lu C."/>
            <person name="Majoros W.H."/>
            <person name="May G.S."/>
            <person name="Miller B.L."/>
            <person name="Mohamoud Y."/>
            <person name="Molina M."/>
            <person name="Monod M."/>
            <person name="Mouyna I."/>
            <person name="Mulligan S."/>
            <person name="Murphy L.D."/>
            <person name="O'Neil S."/>
            <person name="Paulsen I."/>
            <person name="Penalva M.A."/>
            <person name="Pertea M."/>
            <person name="Price C."/>
            <person name="Pritchard B.L."/>
            <person name="Quail M.A."/>
            <person name="Rabbinowitsch E."/>
            <person name="Rawlins N."/>
            <person name="Rajandream M.A."/>
            <person name="Reichard U."/>
            <person name="Renauld H."/>
            <person name="Robson G.D."/>
            <person name="Rodriguez de Cordoba S."/>
            <person name="Rodriguez-Pena J.M."/>
            <person name="Ronning C.M."/>
            <person name="Rutter S."/>
            <person name="Salzberg S.L."/>
            <person name="Sanchez M."/>
            <person name="Sanchez-Ferrero J.C."/>
            <person name="Saunders D."/>
            <person name="Seeger K."/>
            <person name="Squares R."/>
            <person name="Squares S."/>
            <person name="Takeuchi M."/>
            <person name="Tekaia F."/>
            <person name="Turner G."/>
            <person name="Vazquez de Aldana C.R."/>
            <person name="Weidman J."/>
            <person name="White O."/>
            <person name="Woodward J.R."/>
            <person name="Yu J.-H."/>
            <person name="Fraser C.M."/>
            <person name="Galagan J.E."/>
            <person name="Asai K."/>
            <person name="Machida M."/>
            <person name="Hall N."/>
            <person name="Barrell B.G."/>
            <person name="Denning D.W."/>
        </authorList>
    </citation>
    <scope>NUCLEOTIDE SEQUENCE [LARGE SCALE GENOMIC DNA]</scope>
    <source>
        <strain>ATCC MYA-4609 / CBS 101355 / FGSC A1100 / Af293</strain>
    </source>
</reference>
<keyword id="KW-0010">Activator</keyword>
<keyword id="KW-0539">Nucleus</keyword>
<keyword id="KW-1185">Reference proteome</keyword>
<keyword id="KW-0804">Transcription</keyword>
<keyword id="KW-0805">Transcription regulation</keyword>
<comment type="function">
    <text evidence="1">Component of the Mediator complex, a coactivator involved in the regulated transcription of nearly all RNA polymerase II-dependent genes. Mediator functions as a bridge to convey information from gene-specific regulatory proteins to the basal RNA polymerase II transcription machinery. Mediator is recruited to promoters by direct interactions with regulatory proteins and serves as a scaffold for the assembly of a functional preinitiation complex with RNA polymerase II and the general transcription factors (By similarity).</text>
</comment>
<comment type="subunit">
    <text evidence="1">Component of the Mediator complex.</text>
</comment>
<comment type="subcellular location">
    <subcellularLocation>
        <location evidence="1">Nucleus</location>
    </subcellularLocation>
</comment>
<comment type="similarity">
    <text evidence="3">Belongs to the Mediator complex subunit 18 family.</text>
</comment>
<accession>Q4WNC6</accession>
<gene>
    <name type="primary">srb5</name>
    <name type="synonym">med18</name>
    <name type="ORF">AFUA_6G06830</name>
</gene>
<feature type="chain" id="PRO_0000304754" description="Mediator of RNA polymerase II transcription subunit 18">
    <location>
        <begin position="1"/>
        <end position="268"/>
    </location>
</feature>
<feature type="region of interest" description="Disordered" evidence="2">
    <location>
        <begin position="91"/>
        <end position="112"/>
    </location>
</feature>
<feature type="compositionally biased region" description="Basic and acidic residues" evidence="2">
    <location>
        <begin position="99"/>
        <end position="112"/>
    </location>
</feature>
<evidence type="ECO:0000250" key="1"/>
<evidence type="ECO:0000256" key="2">
    <source>
        <dbReference type="SAM" id="MobiDB-lite"/>
    </source>
</evidence>
<evidence type="ECO:0000305" key="3"/>
<name>MED18_ASPFU</name>
<organism>
    <name type="scientific">Aspergillus fumigatus (strain ATCC MYA-4609 / CBS 101355 / FGSC A1100 / Af293)</name>
    <name type="common">Neosartorya fumigata</name>
    <dbReference type="NCBI Taxonomy" id="330879"/>
    <lineage>
        <taxon>Eukaryota</taxon>
        <taxon>Fungi</taxon>
        <taxon>Dikarya</taxon>
        <taxon>Ascomycota</taxon>
        <taxon>Pezizomycotina</taxon>
        <taxon>Eurotiomycetes</taxon>
        <taxon>Eurotiomycetidae</taxon>
        <taxon>Eurotiales</taxon>
        <taxon>Aspergillaceae</taxon>
        <taxon>Aspergillus</taxon>
        <taxon>Aspergillus subgen. Fumigati</taxon>
    </lineage>
</organism>
<sequence length="268" mass="30087">MHELLLFASVPAHQHHELLQQLAGLTAMQPQHRLERRLVFKAYRKPGLVNVRVGASQDLQGAELQRLNKMLNGGMFYTQVVGPVSEADFGAPASPVADQDAHMSGTDEKSSVRPHYYDYENQPWKLEFRDIPEAATRSAVTTRLMASASLPKGDVTVPMNAWGYNFVTEYAVEGDIFIHNDIVIFLHRVLHYPTESQEPRRQLPALNEMTPLDRSGGYVLQAAITVQDGSNQETMKIASQHLFGLREQLKSAVRLEQADRLSLDTRAK</sequence>
<dbReference type="EMBL" id="AAHF01000006">
    <property type="protein sequence ID" value="EAL88538.1"/>
    <property type="molecule type" value="Genomic_DNA"/>
</dbReference>
<dbReference type="RefSeq" id="XP_750576.1">
    <property type="nucleotide sequence ID" value="XM_745483.1"/>
</dbReference>
<dbReference type="SMR" id="Q4WNC6"/>
<dbReference type="STRING" id="330879.Q4WNC6"/>
<dbReference type="EnsemblFungi" id="EAL88538">
    <property type="protein sequence ID" value="EAL88538"/>
    <property type="gene ID" value="AFUA_6G06830"/>
</dbReference>
<dbReference type="GeneID" id="3508782"/>
<dbReference type="KEGG" id="afm:AFUA_6G06830"/>
<dbReference type="VEuPathDB" id="FungiDB:Afu6g06830"/>
<dbReference type="eggNOG" id="ENOG502S7EN">
    <property type="taxonomic scope" value="Eukaryota"/>
</dbReference>
<dbReference type="HOGENOM" id="CLU_084516_0_0_1"/>
<dbReference type="InParanoid" id="Q4WNC6"/>
<dbReference type="OMA" id="PVHQHHE"/>
<dbReference type="OrthoDB" id="5348092at2759"/>
<dbReference type="Proteomes" id="UP000002530">
    <property type="component" value="Chromosome 6"/>
</dbReference>
<dbReference type="GO" id="GO:0070847">
    <property type="term" value="C:core mediator complex"/>
    <property type="evidence" value="ECO:0000318"/>
    <property type="project" value="GO_Central"/>
</dbReference>
<dbReference type="GO" id="GO:0016592">
    <property type="term" value="C:mediator complex"/>
    <property type="evidence" value="ECO:0000318"/>
    <property type="project" value="GO_Central"/>
</dbReference>
<dbReference type="GO" id="GO:0003712">
    <property type="term" value="F:transcription coregulator activity"/>
    <property type="evidence" value="ECO:0000318"/>
    <property type="project" value="GO_Central"/>
</dbReference>
<dbReference type="GO" id="GO:0060261">
    <property type="term" value="P:positive regulation of transcription initiation by RNA polymerase II"/>
    <property type="evidence" value="ECO:0000318"/>
    <property type="project" value="GO_Central"/>
</dbReference>
<dbReference type="FunFam" id="2.40.320.10:FF:000007">
    <property type="entry name" value="Mediator of RNA polymerase II transcription subunit 18"/>
    <property type="match status" value="1"/>
</dbReference>
<dbReference type="Gene3D" id="2.40.320.10">
    <property type="entry name" value="Hypothetical Protein Pfu-838710-001"/>
    <property type="match status" value="1"/>
</dbReference>
<dbReference type="InterPro" id="IPR019095">
    <property type="entry name" value="Mediator_Med18"/>
</dbReference>
<dbReference type="PANTHER" id="PTHR13321:SF2">
    <property type="entry name" value="MEDIATOR OF RNA POLYMERASE II TRANSCRIPTION SUBUNIT 18"/>
    <property type="match status" value="1"/>
</dbReference>
<dbReference type="PANTHER" id="PTHR13321">
    <property type="entry name" value="MEDIATOR OF RNA POLYMERASE II TRANSCRIPTION, SUBUNIT 18"/>
    <property type="match status" value="1"/>
</dbReference>
<dbReference type="Pfam" id="PF09637">
    <property type="entry name" value="Med18"/>
    <property type="match status" value="1"/>
</dbReference>
<protein>
    <recommendedName>
        <fullName>Mediator of RNA polymerase II transcription subunit 18</fullName>
    </recommendedName>
    <alternativeName>
        <fullName>Mediator complex subunit 18</fullName>
    </alternativeName>
</protein>